<comment type="function">
    <text evidence="1">Binds directly to 23S ribosomal RNA and is necessary for the in vitro assembly process of the 50S ribosomal subunit. It is not involved in the protein synthesizing functions of that subunit.</text>
</comment>
<comment type="similarity">
    <text evidence="1">Belongs to the bacterial ribosomal protein bL20 family.</text>
</comment>
<dbReference type="EMBL" id="CP000050">
    <property type="protein sequence ID" value="AAY48719.1"/>
    <property type="molecule type" value="Genomic_DNA"/>
</dbReference>
<dbReference type="RefSeq" id="WP_011037598.1">
    <property type="nucleotide sequence ID" value="NZ_CP155948.1"/>
</dbReference>
<dbReference type="SMR" id="Q4UW54"/>
<dbReference type="GeneID" id="58012947"/>
<dbReference type="KEGG" id="xcb:XC_1653"/>
<dbReference type="HOGENOM" id="CLU_123265_0_1_6"/>
<dbReference type="Proteomes" id="UP000000420">
    <property type="component" value="Chromosome"/>
</dbReference>
<dbReference type="GO" id="GO:1990904">
    <property type="term" value="C:ribonucleoprotein complex"/>
    <property type="evidence" value="ECO:0007669"/>
    <property type="project" value="UniProtKB-KW"/>
</dbReference>
<dbReference type="GO" id="GO:0005840">
    <property type="term" value="C:ribosome"/>
    <property type="evidence" value="ECO:0007669"/>
    <property type="project" value="UniProtKB-KW"/>
</dbReference>
<dbReference type="GO" id="GO:0019843">
    <property type="term" value="F:rRNA binding"/>
    <property type="evidence" value="ECO:0007669"/>
    <property type="project" value="UniProtKB-UniRule"/>
</dbReference>
<dbReference type="GO" id="GO:0003735">
    <property type="term" value="F:structural constituent of ribosome"/>
    <property type="evidence" value="ECO:0007669"/>
    <property type="project" value="InterPro"/>
</dbReference>
<dbReference type="GO" id="GO:0000027">
    <property type="term" value="P:ribosomal large subunit assembly"/>
    <property type="evidence" value="ECO:0007669"/>
    <property type="project" value="UniProtKB-UniRule"/>
</dbReference>
<dbReference type="GO" id="GO:0006412">
    <property type="term" value="P:translation"/>
    <property type="evidence" value="ECO:0007669"/>
    <property type="project" value="InterPro"/>
</dbReference>
<dbReference type="CDD" id="cd07026">
    <property type="entry name" value="Ribosomal_L20"/>
    <property type="match status" value="1"/>
</dbReference>
<dbReference type="FunFam" id="1.10.1900.20:FF:000001">
    <property type="entry name" value="50S ribosomal protein L20"/>
    <property type="match status" value="1"/>
</dbReference>
<dbReference type="Gene3D" id="6.10.160.10">
    <property type="match status" value="1"/>
</dbReference>
<dbReference type="Gene3D" id="1.10.1900.20">
    <property type="entry name" value="Ribosomal protein L20"/>
    <property type="match status" value="1"/>
</dbReference>
<dbReference type="HAMAP" id="MF_00382">
    <property type="entry name" value="Ribosomal_bL20"/>
    <property type="match status" value="1"/>
</dbReference>
<dbReference type="InterPro" id="IPR005813">
    <property type="entry name" value="Ribosomal_bL20"/>
</dbReference>
<dbReference type="InterPro" id="IPR049946">
    <property type="entry name" value="RIBOSOMAL_L20_CS"/>
</dbReference>
<dbReference type="InterPro" id="IPR035566">
    <property type="entry name" value="Ribosomal_protein_bL20_C"/>
</dbReference>
<dbReference type="NCBIfam" id="TIGR01032">
    <property type="entry name" value="rplT_bact"/>
    <property type="match status" value="1"/>
</dbReference>
<dbReference type="PANTHER" id="PTHR10986">
    <property type="entry name" value="39S RIBOSOMAL PROTEIN L20"/>
    <property type="match status" value="1"/>
</dbReference>
<dbReference type="Pfam" id="PF00453">
    <property type="entry name" value="Ribosomal_L20"/>
    <property type="match status" value="1"/>
</dbReference>
<dbReference type="PRINTS" id="PR00062">
    <property type="entry name" value="RIBOSOMALL20"/>
</dbReference>
<dbReference type="SUPFAM" id="SSF74731">
    <property type="entry name" value="Ribosomal protein L20"/>
    <property type="match status" value="1"/>
</dbReference>
<dbReference type="PROSITE" id="PS00937">
    <property type="entry name" value="RIBOSOMAL_L20"/>
    <property type="match status" value="1"/>
</dbReference>
<name>RL20_XANC8</name>
<proteinExistence type="inferred from homology"/>
<feature type="chain" id="PRO_0000243758" description="Large ribosomal subunit protein bL20">
    <location>
        <begin position="1"/>
        <end position="119"/>
    </location>
</feature>
<evidence type="ECO:0000255" key="1">
    <source>
        <dbReference type="HAMAP-Rule" id="MF_00382"/>
    </source>
</evidence>
<evidence type="ECO:0000305" key="2"/>
<sequence length="119" mass="13373">MARVKRGVQARRRHKKILTLAKGYYNARRKVFRVAKQAVIKAQQYAYIGRKQKKRNFRSLWITRINAAARINGLSYSRFMNGMLKAGITLDRKVLADIAVHDAAGFAALAEKAKGALAA</sequence>
<reference key="1">
    <citation type="journal article" date="2005" name="Genome Res.">
        <title>Comparative and functional genomic analyses of the pathogenicity of phytopathogen Xanthomonas campestris pv. campestris.</title>
        <authorList>
            <person name="Qian W."/>
            <person name="Jia Y."/>
            <person name="Ren S.-X."/>
            <person name="He Y.-Q."/>
            <person name="Feng J.-X."/>
            <person name="Lu L.-F."/>
            <person name="Sun Q."/>
            <person name="Ying G."/>
            <person name="Tang D.-J."/>
            <person name="Tang H."/>
            <person name="Wu W."/>
            <person name="Hao P."/>
            <person name="Wang L."/>
            <person name="Jiang B.-L."/>
            <person name="Zeng S."/>
            <person name="Gu W.-Y."/>
            <person name="Lu G."/>
            <person name="Rong L."/>
            <person name="Tian Y."/>
            <person name="Yao Z."/>
            <person name="Fu G."/>
            <person name="Chen B."/>
            <person name="Fang R."/>
            <person name="Qiang B."/>
            <person name="Chen Z."/>
            <person name="Zhao G.-P."/>
            <person name="Tang J.-L."/>
            <person name="He C."/>
        </authorList>
    </citation>
    <scope>NUCLEOTIDE SEQUENCE [LARGE SCALE GENOMIC DNA]</scope>
    <source>
        <strain>8004</strain>
    </source>
</reference>
<gene>
    <name evidence="1" type="primary">rplT</name>
    <name type="ordered locus">XC_1653</name>
</gene>
<accession>Q4UW54</accession>
<keyword id="KW-0687">Ribonucleoprotein</keyword>
<keyword id="KW-0689">Ribosomal protein</keyword>
<keyword id="KW-0694">RNA-binding</keyword>
<keyword id="KW-0699">rRNA-binding</keyword>
<protein>
    <recommendedName>
        <fullName evidence="1">Large ribosomal subunit protein bL20</fullName>
    </recommendedName>
    <alternativeName>
        <fullName evidence="2">50S ribosomal protein L20</fullName>
    </alternativeName>
</protein>
<organism>
    <name type="scientific">Xanthomonas campestris pv. campestris (strain 8004)</name>
    <dbReference type="NCBI Taxonomy" id="314565"/>
    <lineage>
        <taxon>Bacteria</taxon>
        <taxon>Pseudomonadati</taxon>
        <taxon>Pseudomonadota</taxon>
        <taxon>Gammaproteobacteria</taxon>
        <taxon>Lysobacterales</taxon>
        <taxon>Lysobacteraceae</taxon>
        <taxon>Xanthomonas</taxon>
    </lineage>
</organism>